<feature type="chain" id="PRO_1000078603" description="Porphobilinogen deaminase">
    <location>
        <begin position="1"/>
        <end position="318"/>
    </location>
</feature>
<feature type="modified residue" description="S-(dipyrrolylmethanemethyl)cysteine" evidence="1">
    <location>
        <position position="248"/>
    </location>
</feature>
<reference key="1">
    <citation type="submission" date="2008-01" db="EMBL/GenBank/DDBJ databases">
        <title>Complete sequence of chromosome of Caulobacter sp. K31.</title>
        <authorList>
            <consortium name="US DOE Joint Genome Institute"/>
            <person name="Copeland A."/>
            <person name="Lucas S."/>
            <person name="Lapidus A."/>
            <person name="Barry K."/>
            <person name="Glavina del Rio T."/>
            <person name="Dalin E."/>
            <person name="Tice H."/>
            <person name="Pitluck S."/>
            <person name="Bruce D."/>
            <person name="Goodwin L."/>
            <person name="Thompson L.S."/>
            <person name="Brettin T."/>
            <person name="Detter J.C."/>
            <person name="Han C."/>
            <person name="Schmutz J."/>
            <person name="Larimer F."/>
            <person name="Land M."/>
            <person name="Hauser L."/>
            <person name="Kyrpides N."/>
            <person name="Kim E."/>
            <person name="Stephens C."/>
            <person name="Richardson P."/>
        </authorList>
    </citation>
    <scope>NUCLEOTIDE SEQUENCE [LARGE SCALE GENOMIC DNA]</scope>
    <source>
        <strain>K31</strain>
    </source>
</reference>
<gene>
    <name evidence="1" type="primary">hemC</name>
    <name type="ordered locus">Caul_0118</name>
</gene>
<keyword id="KW-0627">Porphyrin biosynthesis</keyword>
<keyword id="KW-0808">Transferase</keyword>
<evidence type="ECO:0000255" key="1">
    <source>
        <dbReference type="HAMAP-Rule" id="MF_00260"/>
    </source>
</evidence>
<comment type="function">
    <text evidence="1">Tetrapolymerization of the monopyrrole PBG into the hydroxymethylbilane pre-uroporphyrinogen in several discrete steps.</text>
</comment>
<comment type="catalytic activity">
    <reaction evidence="1">
        <text>4 porphobilinogen + H2O = hydroxymethylbilane + 4 NH4(+)</text>
        <dbReference type="Rhea" id="RHEA:13185"/>
        <dbReference type="ChEBI" id="CHEBI:15377"/>
        <dbReference type="ChEBI" id="CHEBI:28938"/>
        <dbReference type="ChEBI" id="CHEBI:57845"/>
        <dbReference type="ChEBI" id="CHEBI:58126"/>
        <dbReference type="EC" id="2.5.1.61"/>
    </reaction>
</comment>
<comment type="cofactor">
    <cofactor evidence="1">
        <name>dipyrromethane</name>
        <dbReference type="ChEBI" id="CHEBI:60342"/>
    </cofactor>
    <text evidence="1">Binds 1 dipyrromethane group covalently.</text>
</comment>
<comment type="pathway">
    <text evidence="1">Porphyrin-containing compound metabolism; protoporphyrin-IX biosynthesis; coproporphyrinogen-III from 5-aminolevulinate: step 2/4.</text>
</comment>
<comment type="subunit">
    <text evidence="1">Monomer.</text>
</comment>
<comment type="miscellaneous">
    <text evidence="1">The porphobilinogen subunits are added to the dipyrromethane group.</text>
</comment>
<comment type="similarity">
    <text evidence="1">Belongs to the HMBS family.</text>
</comment>
<accession>B0T287</accession>
<sequence>MSRQPIRIGARGSKLSLAQSGLMQARIAAALGAGPGDDIDAFAQLIPIVTSGDRIQDRRLMEIGGKGLFTKEIEEALLDGRIDCAIHSLKDMPAELPPGLVLAAVPEREDPRDAFISHVAERLEDLSKGARLGTASLRRQAQALHVRPDLEIVMLRGNVDTRLAKLERGEADAILLAQSGLNRLGLGHITNSWLDPLAAPPAPGQGALVIETRAEDVDLPWLQAVRCQATTLAVAAERGALYALEGSCRTAVGAHARLDGLILTMIVEALTPDGVQRFRREGSATLSSLDAADQARALGLELGGAVRAEGGPALILTE</sequence>
<dbReference type="EC" id="2.5.1.61" evidence="1"/>
<dbReference type="EMBL" id="CP000927">
    <property type="protein sequence ID" value="ABZ69256.1"/>
    <property type="molecule type" value="Genomic_DNA"/>
</dbReference>
<dbReference type="SMR" id="B0T287"/>
<dbReference type="STRING" id="366602.Caul_0118"/>
<dbReference type="KEGG" id="cak:Caul_0118"/>
<dbReference type="eggNOG" id="COG0181">
    <property type="taxonomic scope" value="Bacteria"/>
</dbReference>
<dbReference type="HOGENOM" id="CLU_019704_1_0_5"/>
<dbReference type="OrthoDB" id="9810298at2"/>
<dbReference type="UniPathway" id="UPA00251">
    <property type="reaction ID" value="UER00319"/>
</dbReference>
<dbReference type="GO" id="GO:0005737">
    <property type="term" value="C:cytoplasm"/>
    <property type="evidence" value="ECO:0007669"/>
    <property type="project" value="TreeGrafter"/>
</dbReference>
<dbReference type="GO" id="GO:0004418">
    <property type="term" value="F:hydroxymethylbilane synthase activity"/>
    <property type="evidence" value="ECO:0007669"/>
    <property type="project" value="UniProtKB-UniRule"/>
</dbReference>
<dbReference type="GO" id="GO:0006782">
    <property type="term" value="P:protoporphyrinogen IX biosynthetic process"/>
    <property type="evidence" value="ECO:0007669"/>
    <property type="project" value="UniProtKB-UniRule"/>
</dbReference>
<dbReference type="FunFam" id="3.40.190.10:FF:000005">
    <property type="entry name" value="Porphobilinogen deaminase"/>
    <property type="match status" value="1"/>
</dbReference>
<dbReference type="Gene3D" id="3.40.190.10">
    <property type="entry name" value="Periplasmic binding protein-like II"/>
    <property type="match status" value="2"/>
</dbReference>
<dbReference type="Gene3D" id="3.30.160.40">
    <property type="entry name" value="Porphobilinogen deaminase, C-terminal domain"/>
    <property type="match status" value="1"/>
</dbReference>
<dbReference type="HAMAP" id="MF_00260">
    <property type="entry name" value="Porphobil_deam"/>
    <property type="match status" value="1"/>
</dbReference>
<dbReference type="InterPro" id="IPR000860">
    <property type="entry name" value="HemC"/>
</dbReference>
<dbReference type="InterPro" id="IPR022419">
    <property type="entry name" value="Porphobilin_deaminase_cofac_BS"/>
</dbReference>
<dbReference type="InterPro" id="IPR022417">
    <property type="entry name" value="Porphobilin_deaminase_N"/>
</dbReference>
<dbReference type="InterPro" id="IPR022418">
    <property type="entry name" value="Porphobilinogen_deaminase_C"/>
</dbReference>
<dbReference type="InterPro" id="IPR036803">
    <property type="entry name" value="Porphobilinogen_deaminase_C_sf"/>
</dbReference>
<dbReference type="NCBIfam" id="TIGR00212">
    <property type="entry name" value="hemC"/>
    <property type="match status" value="1"/>
</dbReference>
<dbReference type="PANTHER" id="PTHR11557">
    <property type="entry name" value="PORPHOBILINOGEN DEAMINASE"/>
    <property type="match status" value="1"/>
</dbReference>
<dbReference type="PANTHER" id="PTHR11557:SF0">
    <property type="entry name" value="PORPHOBILINOGEN DEAMINASE"/>
    <property type="match status" value="1"/>
</dbReference>
<dbReference type="Pfam" id="PF01379">
    <property type="entry name" value="Porphobil_deam"/>
    <property type="match status" value="1"/>
</dbReference>
<dbReference type="Pfam" id="PF03900">
    <property type="entry name" value="Porphobil_deamC"/>
    <property type="match status" value="1"/>
</dbReference>
<dbReference type="PIRSF" id="PIRSF001438">
    <property type="entry name" value="4pyrrol_synth_OHMeBilane_synth"/>
    <property type="match status" value="1"/>
</dbReference>
<dbReference type="PRINTS" id="PR00151">
    <property type="entry name" value="PORPHBDMNASE"/>
</dbReference>
<dbReference type="SUPFAM" id="SSF53850">
    <property type="entry name" value="Periplasmic binding protein-like II"/>
    <property type="match status" value="1"/>
</dbReference>
<dbReference type="SUPFAM" id="SSF54782">
    <property type="entry name" value="Porphobilinogen deaminase (hydroxymethylbilane synthase), C-terminal domain"/>
    <property type="match status" value="1"/>
</dbReference>
<dbReference type="PROSITE" id="PS00533">
    <property type="entry name" value="PORPHOBILINOGEN_DEAM"/>
    <property type="match status" value="1"/>
</dbReference>
<name>HEM3_CAUSK</name>
<protein>
    <recommendedName>
        <fullName evidence="1">Porphobilinogen deaminase</fullName>
        <shortName evidence="1">PBG</shortName>
        <ecNumber evidence="1">2.5.1.61</ecNumber>
    </recommendedName>
    <alternativeName>
        <fullName evidence="1">Hydroxymethylbilane synthase</fullName>
        <shortName evidence="1">HMBS</shortName>
    </alternativeName>
    <alternativeName>
        <fullName evidence="1">Pre-uroporphyrinogen synthase</fullName>
    </alternativeName>
</protein>
<organism>
    <name type="scientific">Caulobacter sp. (strain K31)</name>
    <dbReference type="NCBI Taxonomy" id="366602"/>
    <lineage>
        <taxon>Bacteria</taxon>
        <taxon>Pseudomonadati</taxon>
        <taxon>Pseudomonadota</taxon>
        <taxon>Alphaproteobacteria</taxon>
        <taxon>Caulobacterales</taxon>
        <taxon>Caulobacteraceae</taxon>
        <taxon>Caulobacter</taxon>
    </lineage>
</organism>
<proteinExistence type="inferred from homology"/>